<comment type="function">
    <text evidence="1">Cell wall formation. Adds enolpyruvyl to UDP-N-acetylglucosamine.</text>
</comment>
<comment type="catalytic activity">
    <reaction evidence="1">
        <text>phosphoenolpyruvate + UDP-N-acetyl-alpha-D-glucosamine = UDP-N-acetyl-3-O-(1-carboxyvinyl)-alpha-D-glucosamine + phosphate</text>
        <dbReference type="Rhea" id="RHEA:18681"/>
        <dbReference type="ChEBI" id="CHEBI:43474"/>
        <dbReference type="ChEBI" id="CHEBI:57705"/>
        <dbReference type="ChEBI" id="CHEBI:58702"/>
        <dbReference type="ChEBI" id="CHEBI:68483"/>
        <dbReference type="EC" id="2.5.1.7"/>
    </reaction>
</comment>
<comment type="pathway">
    <text evidence="1">Cell wall biogenesis; peptidoglycan biosynthesis.</text>
</comment>
<comment type="subcellular location">
    <subcellularLocation>
        <location evidence="1">Cytoplasm</location>
    </subcellularLocation>
</comment>
<comment type="similarity">
    <text evidence="1">Belongs to the EPSP synthase family. MurA subfamily.</text>
</comment>
<accession>B6I1R2</accession>
<organism>
    <name type="scientific">Escherichia coli (strain SE11)</name>
    <dbReference type="NCBI Taxonomy" id="409438"/>
    <lineage>
        <taxon>Bacteria</taxon>
        <taxon>Pseudomonadati</taxon>
        <taxon>Pseudomonadota</taxon>
        <taxon>Gammaproteobacteria</taxon>
        <taxon>Enterobacterales</taxon>
        <taxon>Enterobacteriaceae</taxon>
        <taxon>Escherichia</taxon>
    </lineage>
</organism>
<protein>
    <recommendedName>
        <fullName evidence="1">UDP-N-acetylglucosamine 1-carboxyvinyltransferase</fullName>
        <ecNumber evidence="1">2.5.1.7</ecNumber>
    </recommendedName>
    <alternativeName>
        <fullName evidence="1">Enoylpyruvate transferase</fullName>
    </alternativeName>
    <alternativeName>
        <fullName evidence="1">UDP-N-acetylglucosamine enolpyruvyl transferase</fullName>
        <shortName evidence="1">EPT</shortName>
    </alternativeName>
</protein>
<sequence length="419" mass="44818">MDKFRVQGPTKLQGEVTISGAKNAALPILFAALLAEEPVEIQNVPKLKDVDTSMKLLSQLGAKVERNGSVHIDARDVNVFCAPYDLVKTMRASIWALGPLVARFGQGQVSLPGGCTIGARPVDLHISGLEQLGATIKLEEGYVKASVDGRLKGAHIVMDKVSVGATVTIMCAATLAEGTTIIENAAREPEIVDTANFLITLGAKISGQGTDRIVIEGVERLGGGVYRVLPDRIETGTFLVAAAISRGKIICRNAQPDTLDAVLAKLRDAGADIEVGEDWISLDMHGKRPKAVNVRTAPHPAFPTDMQAQFTLLNLVAEGTGFITETVFENRFMHVPELSRMGAHAEIESNTVICHGVEKLSGAQVMATDLRASASLVLAGCIAEGTTVVDRIYHIDRGYERIEDKLRALGANIERVKGE</sequence>
<name>MURA_ECOSE</name>
<evidence type="ECO:0000255" key="1">
    <source>
        <dbReference type="HAMAP-Rule" id="MF_00111"/>
    </source>
</evidence>
<dbReference type="EC" id="2.5.1.7" evidence="1"/>
<dbReference type="EMBL" id="AP009240">
    <property type="protein sequence ID" value="BAG78997.1"/>
    <property type="molecule type" value="Genomic_DNA"/>
</dbReference>
<dbReference type="RefSeq" id="WP_000357259.1">
    <property type="nucleotide sequence ID" value="NC_011415.1"/>
</dbReference>
<dbReference type="SMR" id="B6I1R2"/>
<dbReference type="GeneID" id="93778792"/>
<dbReference type="KEGG" id="ecy:ECSE_3473"/>
<dbReference type="HOGENOM" id="CLU_027387_0_0_6"/>
<dbReference type="UniPathway" id="UPA00219"/>
<dbReference type="Proteomes" id="UP000008199">
    <property type="component" value="Chromosome"/>
</dbReference>
<dbReference type="GO" id="GO:0005737">
    <property type="term" value="C:cytoplasm"/>
    <property type="evidence" value="ECO:0007669"/>
    <property type="project" value="UniProtKB-SubCell"/>
</dbReference>
<dbReference type="GO" id="GO:0008760">
    <property type="term" value="F:UDP-N-acetylglucosamine 1-carboxyvinyltransferase activity"/>
    <property type="evidence" value="ECO:0007669"/>
    <property type="project" value="UniProtKB-UniRule"/>
</dbReference>
<dbReference type="GO" id="GO:0051301">
    <property type="term" value="P:cell division"/>
    <property type="evidence" value="ECO:0007669"/>
    <property type="project" value="UniProtKB-KW"/>
</dbReference>
<dbReference type="GO" id="GO:0071555">
    <property type="term" value="P:cell wall organization"/>
    <property type="evidence" value="ECO:0007669"/>
    <property type="project" value="UniProtKB-KW"/>
</dbReference>
<dbReference type="GO" id="GO:0009252">
    <property type="term" value="P:peptidoglycan biosynthetic process"/>
    <property type="evidence" value="ECO:0007669"/>
    <property type="project" value="UniProtKB-UniRule"/>
</dbReference>
<dbReference type="GO" id="GO:0008360">
    <property type="term" value="P:regulation of cell shape"/>
    <property type="evidence" value="ECO:0007669"/>
    <property type="project" value="UniProtKB-KW"/>
</dbReference>
<dbReference type="GO" id="GO:0019277">
    <property type="term" value="P:UDP-N-acetylgalactosamine biosynthetic process"/>
    <property type="evidence" value="ECO:0007669"/>
    <property type="project" value="InterPro"/>
</dbReference>
<dbReference type="CDD" id="cd01555">
    <property type="entry name" value="UdpNAET"/>
    <property type="match status" value="1"/>
</dbReference>
<dbReference type="FunFam" id="3.65.10.10:FF:000002">
    <property type="entry name" value="UDP-N-acetylglucosamine 1-carboxyvinyltransferase"/>
    <property type="match status" value="1"/>
</dbReference>
<dbReference type="Gene3D" id="3.65.10.10">
    <property type="entry name" value="Enolpyruvate transferase domain"/>
    <property type="match status" value="2"/>
</dbReference>
<dbReference type="HAMAP" id="MF_00111">
    <property type="entry name" value="MurA"/>
    <property type="match status" value="1"/>
</dbReference>
<dbReference type="InterPro" id="IPR001986">
    <property type="entry name" value="Enolpyruvate_Tfrase_dom"/>
</dbReference>
<dbReference type="InterPro" id="IPR036968">
    <property type="entry name" value="Enolpyruvate_Tfrase_sf"/>
</dbReference>
<dbReference type="InterPro" id="IPR050068">
    <property type="entry name" value="MurA_subfamily"/>
</dbReference>
<dbReference type="InterPro" id="IPR013792">
    <property type="entry name" value="RNA3'P_cycl/enolpyr_Trfase_a/b"/>
</dbReference>
<dbReference type="InterPro" id="IPR005750">
    <property type="entry name" value="UDP_GlcNAc_COvinyl_MurA"/>
</dbReference>
<dbReference type="NCBIfam" id="TIGR01072">
    <property type="entry name" value="murA"/>
    <property type="match status" value="1"/>
</dbReference>
<dbReference type="NCBIfam" id="NF006873">
    <property type="entry name" value="PRK09369.1"/>
    <property type="match status" value="1"/>
</dbReference>
<dbReference type="PANTHER" id="PTHR43783">
    <property type="entry name" value="UDP-N-ACETYLGLUCOSAMINE 1-CARBOXYVINYLTRANSFERASE"/>
    <property type="match status" value="1"/>
</dbReference>
<dbReference type="PANTHER" id="PTHR43783:SF1">
    <property type="entry name" value="UDP-N-ACETYLGLUCOSAMINE 1-CARBOXYVINYLTRANSFERASE"/>
    <property type="match status" value="1"/>
</dbReference>
<dbReference type="Pfam" id="PF00275">
    <property type="entry name" value="EPSP_synthase"/>
    <property type="match status" value="1"/>
</dbReference>
<dbReference type="SUPFAM" id="SSF55205">
    <property type="entry name" value="EPT/RTPC-like"/>
    <property type="match status" value="1"/>
</dbReference>
<reference key="1">
    <citation type="journal article" date="2008" name="DNA Res.">
        <title>Complete genome sequence and comparative analysis of the wild-type commensal Escherichia coli strain SE11 isolated from a healthy adult.</title>
        <authorList>
            <person name="Oshima K."/>
            <person name="Toh H."/>
            <person name="Ogura Y."/>
            <person name="Sasamoto H."/>
            <person name="Morita H."/>
            <person name="Park S.-H."/>
            <person name="Ooka T."/>
            <person name="Iyoda S."/>
            <person name="Taylor T.D."/>
            <person name="Hayashi T."/>
            <person name="Itoh K."/>
            <person name="Hattori M."/>
        </authorList>
    </citation>
    <scope>NUCLEOTIDE SEQUENCE [LARGE SCALE GENOMIC DNA]</scope>
    <source>
        <strain>SE11</strain>
    </source>
</reference>
<proteinExistence type="inferred from homology"/>
<gene>
    <name evidence="1" type="primary">murA</name>
    <name type="ordered locus">ECSE_3473</name>
</gene>
<keyword id="KW-0131">Cell cycle</keyword>
<keyword id="KW-0132">Cell division</keyword>
<keyword id="KW-0133">Cell shape</keyword>
<keyword id="KW-0961">Cell wall biogenesis/degradation</keyword>
<keyword id="KW-0963">Cytoplasm</keyword>
<keyword id="KW-0573">Peptidoglycan synthesis</keyword>
<keyword id="KW-0670">Pyruvate</keyword>
<keyword id="KW-0808">Transferase</keyword>
<feature type="chain" id="PRO_1000094689" description="UDP-N-acetylglucosamine 1-carboxyvinyltransferase">
    <location>
        <begin position="1"/>
        <end position="419"/>
    </location>
</feature>
<feature type="active site" description="Proton donor" evidence="1">
    <location>
        <position position="115"/>
    </location>
</feature>
<feature type="binding site" evidence="1">
    <location>
        <begin position="22"/>
        <end position="23"/>
    </location>
    <ligand>
        <name>phosphoenolpyruvate</name>
        <dbReference type="ChEBI" id="CHEBI:58702"/>
    </ligand>
</feature>
<feature type="binding site" evidence="1">
    <location>
        <position position="91"/>
    </location>
    <ligand>
        <name>UDP-N-acetyl-alpha-D-glucosamine</name>
        <dbReference type="ChEBI" id="CHEBI:57705"/>
    </ligand>
</feature>
<feature type="binding site" evidence="1">
    <location>
        <begin position="120"/>
        <end position="124"/>
    </location>
    <ligand>
        <name>UDP-N-acetyl-alpha-D-glucosamine</name>
        <dbReference type="ChEBI" id="CHEBI:57705"/>
    </ligand>
</feature>
<feature type="binding site" evidence="1">
    <location>
        <begin position="160"/>
        <end position="163"/>
    </location>
    <ligand>
        <name>UDP-N-acetyl-alpha-D-glucosamine</name>
        <dbReference type="ChEBI" id="CHEBI:57705"/>
    </ligand>
</feature>
<feature type="binding site" evidence="1">
    <location>
        <position position="305"/>
    </location>
    <ligand>
        <name>UDP-N-acetyl-alpha-D-glucosamine</name>
        <dbReference type="ChEBI" id="CHEBI:57705"/>
    </ligand>
</feature>
<feature type="binding site" evidence="1">
    <location>
        <position position="327"/>
    </location>
    <ligand>
        <name>UDP-N-acetyl-alpha-D-glucosamine</name>
        <dbReference type="ChEBI" id="CHEBI:57705"/>
    </ligand>
</feature>
<feature type="modified residue" description="2-(S-cysteinyl)pyruvic acid O-phosphothioketal" evidence="1">
    <location>
        <position position="115"/>
    </location>
</feature>